<evidence type="ECO:0000255" key="1">
    <source>
        <dbReference type="PROSITE-ProRule" id="PRU00238"/>
    </source>
</evidence>
<evidence type="ECO:0007829" key="2">
    <source>
        <dbReference type="PDB" id="3FS4"/>
    </source>
</evidence>
<protein>
    <recommendedName>
        <fullName>Hemoglobin subunit beta</fullName>
    </recommendedName>
    <alternativeName>
        <fullName>Beta-globin</fullName>
    </alternativeName>
    <alternativeName>
        <fullName>Hemoglobin beta chain</fullName>
    </alternativeName>
</protein>
<gene>
    <name type="primary">HBB</name>
</gene>
<organism>
    <name type="scientific">Struthio camelus</name>
    <name type="common">Common ostrich</name>
    <dbReference type="NCBI Taxonomy" id="8801"/>
    <lineage>
        <taxon>Eukaryota</taxon>
        <taxon>Metazoa</taxon>
        <taxon>Chordata</taxon>
        <taxon>Craniata</taxon>
        <taxon>Vertebrata</taxon>
        <taxon>Euteleostomi</taxon>
        <taxon>Archelosauria</taxon>
        <taxon>Archosauria</taxon>
        <taxon>Dinosauria</taxon>
        <taxon>Saurischia</taxon>
        <taxon>Theropoda</taxon>
        <taxon>Coelurosauria</taxon>
        <taxon>Aves</taxon>
        <taxon>Palaeognathae</taxon>
        <taxon>Struthioniformes</taxon>
        <taxon>Struthionidae</taxon>
        <taxon>Struthio</taxon>
    </lineage>
</organism>
<sequence>VQWSAEEKQLISGLWGKVNVADCGAEALARLLIVYPWTQRFFASFGNLSSPTAILGNPMVRAHGKKVLTSFGDAVKNLDNIKNTFAQLSELHCDKLHVDPENFRLLGDILIIVLAAHFTKEFTPECQAAWQKLVRVVAHALARKYH</sequence>
<proteinExistence type="evidence at protein level"/>
<feature type="chain" id="PRO_0000053116" description="Hemoglobin subunit beta">
    <location>
        <begin position="1"/>
        <end position="146"/>
    </location>
</feature>
<feature type="domain" description="Globin" evidence="1">
    <location>
        <begin position="2"/>
        <end position="146"/>
    </location>
</feature>
<feature type="binding site" description="distal binding residue">
    <location>
        <position position="63"/>
    </location>
    <ligand>
        <name>heme b</name>
        <dbReference type="ChEBI" id="CHEBI:60344"/>
    </ligand>
    <ligandPart>
        <name>Fe</name>
        <dbReference type="ChEBI" id="CHEBI:18248"/>
    </ligandPart>
</feature>
<feature type="binding site" description="proximal binding residue">
    <location>
        <position position="92"/>
    </location>
    <ligand>
        <name>heme b</name>
        <dbReference type="ChEBI" id="CHEBI:60344"/>
    </ligand>
    <ligandPart>
        <name>Fe</name>
        <dbReference type="ChEBI" id="CHEBI:18248"/>
    </ligandPart>
</feature>
<feature type="helix" evidence="2">
    <location>
        <begin position="5"/>
        <end position="15"/>
    </location>
</feature>
<feature type="helix" evidence="2">
    <location>
        <begin position="20"/>
        <end position="34"/>
    </location>
</feature>
<feature type="helix" evidence="2">
    <location>
        <begin position="36"/>
        <end position="45"/>
    </location>
</feature>
<feature type="helix" evidence="2">
    <location>
        <begin position="51"/>
        <end position="56"/>
    </location>
</feature>
<feature type="helix" evidence="2">
    <location>
        <begin position="58"/>
        <end position="76"/>
    </location>
</feature>
<feature type="helix" evidence="2">
    <location>
        <begin position="78"/>
        <end position="80"/>
    </location>
</feature>
<feature type="helix" evidence="2">
    <location>
        <begin position="81"/>
        <end position="84"/>
    </location>
</feature>
<feature type="helix" evidence="2">
    <location>
        <begin position="86"/>
        <end position="93"/>
    </location>
</feature>
<feature type="turn" evidence="2">
    <location>
        <begin position="94"/>
        <end position="96"/>
    </location>
</feature>
<feature type="helix" evidence="2">
    <location>
        <begin position="101"/>
        <end position="118"/>
    </location>
</feature>
<feature type="helix" evidence="2">
    <location>
        <begin position="119"/>
        <end position="121"/>
    </location>
</feature>
<feature type="helix" evidence="2">
    <location>
        <begin position="124"/>
        <end position="142"/>
    </location>
</feature>
<feature type="helix" evidence="2">
    <location>
        <begin position="143"/>
        <end position="145"/>
    </location>
</feature>
<name>HBB_STRCA</name>
<dbReference type="PIR" id="A02443">
    <property type="entry name" value="HBOS"/>
</dbReference>
<dbReference type="PDB" id="3A59">
    <property type="method" value="X-ray"/>
    <property type="resolution" value="3.41 A"/>
    <property type="chains" value="B/D/F/H=1-146"/>
</dbReference>
<dbReference type="PDB" id="3FS4">
    <property type="method" value="X-ray"/>
    <property type="resolution" value="2.22 A"/>
    <property type="chains" value="B/D=1-146"/>
</dbReference>
<dbReference type="PDBsum" id="3A59"/>
<dbReference type="PDBsum" id="3FS4"/>
<dbReference type="SMR" id="P02123"/>
<dbReference type="EvolutionaryTrace" id="P02123"/>
<dbReference type="GO" id="GO:0072562">
    <property type="term" value="C:blood microparticle"/>
    <property type="evidence" value="ECO:0007669"/>
    <property type="project" value="TreeGrafter"/>
</dbReference>
<dbReference type="GO" id="GO:0031838">
    <property type="term" value="C:haptoglobin-hemoglobin complex"/>
    <property type="evidence" value="ECO:0007669"/>
    <property type="project" value="TreeGrafter"/>
</dbReference>
<dbReference type="GO" id="GO:0005833">
    <property type="term" value="C:hemoglobin complex"/>
    <property type="evidence" value="ECO:0007669"/>
    <property type="project" value="InterPro"/>
</dbReference>
<dbReference type="GO" id="GO:0031720">
    <property type="term" value="F:haptoglobin binding"/>
    <property type="evidence" value="ECO:0007669"/>
    <property type="project" value="TreeGrafter"/>
</dbReference>
<dbReference type="GO" id="GO:0020037">
    <property type="term" value="F:heme binding"/>
    <property type="evidence" value="ECO:0007669"/>
    <property type="project" value="InterPro"/>
</dbReference>
<dbReference type="GO" id="GO:0046872">
    <property type="term" value="F:metal ion binding"/>
    <property type="evidence" value="ECO:0007669"/>
    <property type="project" value="UniProtKB-KW"/>
</dbReference>
<dbReference type="GO" id="GO:0043177">
    <property type="term" value="F:organic acid binding"/>
    <property type="evidence" value="ECO:0007669"/>
    <property type="project" value="TreeGrafter"/>
</dbReference>
<dbReference type="GO" id="GO:0019825">
    <property type="term" value="F:oxygen binding"/>
    <property type="evidence" value="ECO:0007669"/>
    <property type="project" value="InterPro"/>
</dbReference>
<dbReference type="GO" id="GO:0005344">
    <property type="term" value="F:oxygen carrier activity"/>
    <property type="evidence" value="ECO:0007669"/>
    <property type="project" value="UniProtKB-KW"/>
</dbReference>
<dbReference type="GO" id="GO:0004601">
    <property type="term" value="F:peroxidase activity"/>
    <property type="evidence" value="ECO:0007669"/>
    <property type="project" value="TreeGrafter"/>
</dbReference>
<dbReference type="GO" id="GO:0042744">
    <property type="term" value="P:hydrogen peroxide catabolic process"/>
    <property type="evidence" value="ECO:0007669"/>
    <property type="project" value="TreeGrafter"/>
</dbReference>
<dbReference type="CDD" id="cd08925">
    <property type="entry name" value="Hb-beta-like"/>
    <property type="match status" value="1"/>
</dbReference>
<dbReference type="FunFam" id="1.10.490.10:FF:000001">
    <property type="entry name" value="Hemoglobin subunit beta"/>
    <property type="match status" value="1"/>
</dbReference>
<dbReference type="Gene3D" id="1.10.490.10">
    <property type="entry name" value="Globins"/>
    <property type="match status" value="1"/>
</dbReference>
<dbReference type="InterPro" id="IPR000971">
    <property type="entry name" value="Globin"/>
</dbReference>
<dbReference type="InterPro" id="IPR009050">
    <property type="entry name" value="Globin-like_sf"/>
</dbReference>
<dbReference type="InterPro" id="IPR012292">
    <property type="entry name" value="Globin/Proto"/>
</dbReference>
<dbReference type="InterPro" id="IPR002337">
    <property type="entry name" value="Hemoglobin_b"/>
</dbReference>
<dbReference type="InterPro" id="IPR050056">
    <property type="entry name" value="Hemoglobin_oxygen_transport"/>
</dbReference>
<dbReference type="PANTHER" id="PTHR11442">
    <property type="entry name" value="HEMOGLOBIN FAMILY MEMBER"/>
    <property type="match status" value="1"/>
</dbReference>
<dbReference type="PANTHER" id="PTHR11442:SF7">
    <property type="entry name" value="HEMOGLOBIN SUBUNIT EPSILON"/>
    <property type="match status" value="1"/>
</dbReference>
<dbReference type="Pfam" id="PF00042">
    <property type="entry name" value="Globin"/>
    <property type="match status" value="1"/>
</dbReference>
<dbReference type="PRINTS" id="PR00814">
    <property type="entry name" value="BETAHAEM"/>
</dbReference>
<dbReference type="SUPFAM" id="SSF46458">
    <property type="entry name" value="Globin-like"/>
    <property type="match status" value="1"/>
</dbReference>
<dbReference type="PROSITE" id="PS01033">
    <property type="entry name" value="GLOBIN"/>
    <property type="match status" value="1"/>
</dbReference>
<reference key="1">
    <citation type="journal article" date="1980" name="Hoppe-Seyler's Z. Physiol. Chem.">
        <title>The sequence of the hemoglobin of barheaded goose (Anser indicus) and ostrich (Struthio camelus). Inositol pentaphosphate as a modulator of the evolution rate: the surprising sequence alpha 63 (E12) valine.</title>
        <authorList>
            <person name="Oberthur W."/>
            <person name="Voelter W."/>
            <person name="Braunitzer G."/>
        </authorList>
    </citation>
    <scope>PROTEIN SEQUENCE</scope>
</reference>
<accession>P02123</accession>
<keyword id="KW-0002">3D-structure</keyword>
<keyword id="KW-0903">Direct protein sequencing</keyword>
<keyword id="KW-0349">Heme</keyword>
<keyword id="KW-0408">Iron</keyword>
<keyword id="KW-0479">Metal-binding</keyword>
<keyword id="KW-0561">Oxygen transport</keyword>
<keyword id="KW-0813">Transport</keyword>
<comment type="function">
    <text>Involved in oxygen transport from the lung to the various peripheral tissues.</text>
</comment>
<comment type="subunit">
    <text>Heterotetramer of two alpha chains and two beta chains.</text>
</comment>
<comment type="tissue specificity">
    <text>Red blood cells.</text>
</comment>
<comment type="similarity">
    <text evidence="1">Belongs to the globin family.</text>
</comment>